<evidence type="ECO:0000255" key="1">
    <source>
        <dbReference type="HAMAP-Rule" id="MF_01303"/>
    </source>
</evidence>
<sequence>MSHSVKIYDTCIGCTQCVRACPTDVLEMIPWDGCKAKQIASAPRTEDCVGCKRCESACPTDFLSVRVYLWHETTRSMGLAY</sequence>
<accession>A4QKP6</accession>
<feature type="chain" id="PRO_0000292116" description="Photosystem I iron-sulfur center">
    <location>
        <begin position="1"/>
        <end position="81"/>
    </location>
</feature>
<feature type="domain" description="4Fe-4S ferredoxin-type 1" evidence="1">
    <location>
        <begin position="2"/>
        <end position="31"/>
    </location>
</feature>
<feature type="domain" description="4Fe-4S ferredoxin-type 2" evidence="1">
    <location>
        <begin position="39"/>
        <end position="68"/>
    </location>
</feature>
<feature type="binding site" evidence="1">
    <location>
        <position position="11"/>
    </location>
    <ligand>
        <name>[4Fe-4S] cluster</name>
        <dbReference type="ChEBI" id="CHEBI:49883"/>
        <label>1</label>
    </ligand>
</feature>
<feature type="binding site" evidence="1">
    <location>
        <position position="14"/>
    </location>
    <ligand>
        <name>[4Fe-4S] cluster</name>
        <dbReference type="ChEBI" id="CHEBI:49883"/>
        <label>1</label>
    </ligand>
</feature>
<feature type="binding site" evidence="1">
    <location>
        <position position="17"/>
    </location>
    <ligand>
        <name>[4Fe-4S] cluster</name>
        <dbReference type="ChEBI" id="CHEBI:49883"/>
        <label>1</label>
    </ligand>
</feature>
<feature type="binding site" evidence="1">
    <location>
        <position position="21"/>
    </location>
    <ligand>
        <name>[4Fe-4S] cluster</name>
        <dbReference type="ChEBI" id="CHEBI:49883"/>
        <label>2</label>
    </ligand>
</feature>
<feature type="binding site" evidence="1">
    <location>
        <position position="48"/>
    </location>
    <ligand>
        <name>[4Fe-4S] cluster</name>
        <dbReference type="ChEBI" id="CHEBI:49883"/>
        <label>2</label>
    </ligand>
</feature>
<feature type="binding site" evidence="1">
    <location>
        <position position="51"/>
    </location>
    <ligand>
        <name>[4Fe-4S] cluster</name>
        <dbReference type="ChEBI" id="CHEBI:49883"/>
        <label>2</label>
    </ligand>
</feature>
<feature type="binding site" evidence="1">
    <location>
        <position position="54"/>
    </location>
    <ligand>
        <name>[4Fe-4S] cluster</name>
        <dbReference type="ChEBI" id="CHEBI:49883"/>
        <label>2</label>
    </ligand>
</feature>
<feature type="binding site" evidence="1">
    <location>
        <position position="58"/>
    </location>
    <ligand>
        <name>[4Fe-4S] cluster</name>
        <dbReference type="ChEBI" id="CHEBI:49883"/>
        <label>1</label>
    </ligand>
</feature>
<proteinExistence type="inferred from homology"/>
<name>PSAC_CAPBU</name>
<protein>
    <recommendedName>
        <fullName evidence="1">Photosystem I iron-sulfur center</fullName>
        <ecNumber evidence="1">1.97.1.12</ecNumber>
    </recommendedName>
    <alternativeName>
        <fullName evidence="1">9 kDa polypeptide</fullName>
    </alternativeName>
    <alternativeName>
        <fullName evidence="1">PSI-C</fullName>
    </alternativeName>
    <alternativeName>
        <fullName evidence="1">Photosystem I subunit VII</fullName>
    </alternativeName>
    <alternativeName>
        <fullName evidence="1">PsaC</fullName>
    </alternativeName>
</protein>
<geneLocation type="chloroplast"/>
<comment type="function">
    <text evidence="1">Apoprotein for the two 4Fe-4S centers FA and FB of photosystem I (PSI); essential for photochemical activity. FB is the terminal electron acceptor of PSI, donating electrons to ferredoxin. The C-terminus interacts with PsaA/B/D and helps assemble the protein into the PSI complex. Required for binding of PsaD and PsaE to PSI. PSI is a plastocyanin-ferredoxin oxidoreductase, converting photonic excitation into a charge separation, which transfers an electron from the donor P700 chlorophyll pair to the spectroscopically characterized acceptors A0, A1, FX, FA and FB in turn.</text>
</comment>
<comment type="catalytic activity">
    <reaction evidence="1">
        <text>reduced [plastocyanin] + hnu + oxidized [2Fe-2S]-[ferredoxin] = oxidized [plastocyanin] + reduced [2Fe-2S]-[ferredoxin]</text>
        <dbReference type="Rhea" id="RHEA:30407"/>
        <dbReference type="Rhea" id="RHEA-COMP:10000"/>
        <dbReference type="Rhea" id="RHEA-COMP:10001"/>
        <dbReference type="Rhea" id="RHEA-COMP:10039"/>
        <dbReference type="Rhea" id="RHEA-COMP:10040"/>
        <dbReference type="ChEBI" id="CHEBI:29036"/>
        <dbReference type="ChEBI" id="CHEBI:30212"/>
        <dbReference type="ChEBI" id="CHEBI:33737"/>
        <dbReference type="ChEBI" id="CHEBI:33738"/>
        <dbReference type="ChEBI" id="CHEBI:49552"/>
        <dbReference type="EC" id="1.97.1.12"/>
    </reaction>
</comment>
<comment type="cofactor">
    <cofactor evidence="1">
        <name>[4Fe-4S] cluster</name>
        <dbReference type="ChEBI" id="CHEBI:49883"/>
    </cofactor>
    <text evidence="1">Binds 2 [4Fe-4S] clusters. Cluster 2 is most probably the spectroscopically characterized electron acceptor FA and cluster 1 is most probably FB.</text>
</comment>
<comment type="subunit">
    <text evidence="1">The eukaryotic PSI reaction center is composed of at least 11 subunits.</text>
</comment>
<comment type="subcellular location">
    <subcellularLocation>
        <location evidence="1">Plastid</location>
        <location evidence="1">Chloroplast thylakoid membrane</location>
        <topology evidence="1">Peripheral membrane protein</topology>
        <orientation evidence="1">Stromal side</orientation>
    </subcellularLocation>
</comment>
<gene>
    <name evidence="1" type="primary">psaC</name>
</gene>
<dbReference type="EC" id="1.97.1.12" evidence="1"/>
<dbReference type="EMBL" id="AP009371">
    <property type="protein sequence ID" value="BAF50251.1"/>
    <property type="molecule type" value="Genomic_DNA"/>
</dbReference>
<dbReference type="RefSeq" id="YP_001123426.1">
    <property type="nucleotide sequence ID" value="NC_009270.1"/>
</dbReference>
<dbReference type="SMR" id="A4QKP6"/>
<dbReference type="GeneID" id="4961654"/>
<dbReference type="GO" id="GO:0009535">
    <property type="term" value="C:chloroplast thylakoid membrane"/>
    <property type="evidence" value="ECO:0007669"/>
    <property type="project" value="UniProtKB-SubCell"/>
</dbReference>
<dbReference type="GO" id="GO:0009522">
    <property type="term" value="C:photosystem I"/>
    <property type="evidence" value="ECO:0007669"/>
    <property type="project" value="UniProtKB-KW"/>
</dbReference>
<dbReference type="GO" id="GO:0051539">
    <property type="term" value="F:4 iron, 4 sulfur cluster binding"/>
    <property type="evidence" value="ECO:0007669"/>
    <property type="project" value="UniProtKB-KW"/>
</dbReference>
<dbReference type="GO" id="GO:0009055">
    <property type="term" value="F:electron transfer activity"/>
    <property type="evidence" value="ECO:0007669"/>
    <property type="project" value="UniProtKB-UniRule"/>
</dbReference>
<dbReference type="GO" id="GO:0046872">
    <property type="term" value="F:metal ion binding"/>
    <property type="evidence" value="ECO:0007669"/>
    <property type="project" value="UniProtKB-KW"/>
</dbReference>
<dbReference type="GO" id="GO:0016491">
    <property type="term" value="F:oxidoreductase activity"/>
    <property type="evidence" value="ECO:0007669"/>
    <property type="project" value="UniProtKB-KW"/>
</dbReference>
<dbReference type="GO" id="GO:0009773">
    <property type="term" value="P:photosynthetic electron transport in photosystem I"/>
    <property type="evidence" value="ECO:0007669"/>
    <property type="project" value="InterPro"/>
</dbReference>
<dbReference type="FunFam" id="3.30.70.20:FF:000001">
    <property type="entry name" value="Photosystem I iron-sulfur center"/>
    <property type="match status" value="1"/>
</dbReference>
<dbReference type="Gene3D" id="3.30.70.20">
    <property type="match status" value="1"/>
</dbReference>
<dbReference type="HAMAP" id="MF_01303">
    <property type="entry name" value="PSI_PsaC"/>
    <property type="match status" value="1"/>
</dbReference>
<dbReference type="InterPro" id="IPR017896">
    <property type="entry name" value="4Fe4S_Fe-S-bd"/>
</dbReference>
<dbReference type="InterPro" id="IPR017900">
    <property type="entry name" value="4Fe4S_Fe_S_CS"/>
</dbReference>
<dbReference type="InterPro" id="IPR050157">
    <property type="entry name" value="PSI_iron-sulfur_center"/>
</dbReference>
<dbReference type="InterPro" id="IPR017491">
    <property type="entry name" value="PSI_PsaC"/>
</dbReference>
<dbReference type="NCBIfam" id="TIGR03048">
    <property type="entry name" value="PS_I_psaC"/>
    <property type="match status" value="1"/>
</dbReference>
<dbReference type="PANTHER" id="PTHR24960:SF79">
    <property type="entry name" value="PHOTOSYSTEM I IRON-SULFUR CENTER"/>
    <property type="match status" value="1"/>
</dbReference>
<dbReference type="PANTHER" id="PTHR24960">
    <property type="entry name" value="PHOTOSYSTEM I IRON-SULFUR CENTER-RELATED"/>
    <property type="match status" value="1"/>
</dbReference>
<dbReference type="Pfam" id="PF14697">
    <property type="entry name" value="Fer4_21"/>
    <property type="match status" value="1"/>
</dbReference>
<dbReference type="SUPFAM" id="SSF54862">
    <property type="entry name" value="4Fe-4S ferredoxins"/>
    <property type="match status" value="1"/>
</dbReference>
<dbReference type="PROSITE" id="PS00198">
    <property type="entry name" value="4FE4S_FER_1"/>
    <property type="match status" value="2"/>
</dbReference>
<dbReference type="PROSITE" id="PS51379">
    <property type="entry name" value="4FE4S_FER_2"/>
    <property type="match status" value="2"/>
</dbReference>
<reference key="1">
    <citation type="submission" date="2007-03" db="EMBL/GenBank/DDBJ databases">
        <title>Sequencing analysis of Capsella bursa-pastoris JO22 chloroplast DNA.</title>
        <authorList>
            <person name="Hosouchi T."/>
            <person name="Tsuruoka H."/>
            <person name="Kotani H."/>
        </authorList>
    </citation>
    <scope>NUCLEOTIDE SEQUENCE [LARGE SCALE GENOMIC DNA]</scope>
</reference>
<organism>
    <name type="scientific">Capsella bursa-pastoris</name>
    <name type="common">Shepherd's purse</name>
    <name type="synonym">Thlaspi bursa-pastoris</name>
    <dbReference type="NCBI Taxonomy" id="3719"/>
    <lineage>
        <taxon>Eukaryota</taxon>
        <taxon>Viridiplantae</taxon>
        <taxon>Streptophyta</taxon>
        <taxon>Embryophyta</taxon>
        <taxon>Tracheophyta</taxon>
        <taxon>Spermatophyta</taxon>
        <taxon>Magnoliopsida</taxon>
        <taxon>eudicotyledons</taxon>
        <taxon>Gunneridae</taxon>
        <taxon>Pentapetalae</taxon>
        <taxon>rosids</taxon>
        <taxon>malvids</taxon>
        <taxon>Brassicales</taxon>
        <taxon>Brassicaceae</taxon>
        <taxon>Camelineae</taxon>
        <taxon>Capsella</taxon>
    </lineage>
</organism>
<keyword id="KW-0004">4Fe-4S</keyword>
<keyword id="KW-0150">Chloroplast</keyword>
<keyword id="KW-0249">Electron transport</keyword>
<keyword id="KW-0408">Iron</keyword>
<keyword id="KW-0411">Iron-sulfur</keyword>
<keyword id="KW-0472">Membrane</keyword>
<keyword id="KW-0479">Metal-binding</keyword>
<keyword id="KW-0560">Oxidoreductase</keyword>
<keyword id="KW-0602">Photosynthesis</keyword>
<keyword id="KW-0603">Photosystem I</keyword>
<keyword id="KW-0934">Plastid</keyword>
<keyword id="KW-0677">Repeat</keyword>
<keyword id="KW-0793">Thylakoid</keyword>
<keyword id="KW-0813">Transport</keyword>